<proteinExistence type="evidence at transcript level"/>
<keyword id="KW-0012">Acyltransferase</keyword>
<keyword id="KW-0472">Membrane</keyword>
<keyword id="KW-1185">Reference proteome</keyword>
<keyword id="KW-0808">Transferase</keyword>
<keyword id="KW-0812">Transmembrane</keyword>
<keyword id="KW-1133">Transmembrane helix</keyword>
<name>NAT14_DANRE</name>
<feature type="chain" id="PRO_0000307789" description="Probable N-acetyltransferase 14">
    <location>
        <begin position="1"/>
        <end position="280"/>
    </location>
</feature>
<feature type="transmembrane region" description="Helical" evidence="1">
    <location>
        <begin position="37"/>
        <end position="57"/>
    </location>
</feature>
<feature type="transmembrane region" description="Helical" evidence="1">
    <location>
        <begin position="60"/>
        <end position="80"/>
    </location>
</feature>
<feature type="domain" description="N-acetyltransferase" evidence="2">
    <location>
        <begin position="116"/>
        <end position="273"/>
    </location>
</feature>
<feature type="region of interest" description="Disordered" evidence="3">
    <location>
        <begin position="111"/>
        <end position="152"/>
    </location>
</feature>
<dbReference type="EC" id="2.3.1.-" evidence="4"/>
<dbReference type="EMBL" id="BC122198">
    <property type="protein sequence ID" value="AAI22199.1"/>
    <property type="molecule type" value="mRNA"/>
</dbReference>
<dbReference type="RefSeq" id="NP_001038809.1">
    <property type="nucleotide sequence ID" value="NM_001045344.1"/>
</dbReference>
<dbReference type="SMR" id="Q0P4A4"/>
<dbReference type="FunCoup" id="Q0P4A4">
    <property type="interactions" value="1051"/>
</dbReference>
<dbReference type="STRING" id="7955.ENSDARP00000150980"/>
<dbReference type="PaxDb" id="7955-ENSDARP00000111670"/>
<dbReference type="GeneID" id="751624"/>
<dbReference type="KEGG" id="dre:751624"/>
<dbReference type="AGR" id="ZFIN:ZDB-GENE-060825-15"/>
<dbReference type="CTD" id="57106"/>
<dbReference type="ZFIN" id="ZDB-GENE-060825-15">
    <property type="gene designation" value="nat14"/>
</dbReference>
<dbReference type="eggNOG" id="ENOG502RYNT">
    <property type="taxonomic scope" value="Eukaryota"/>
</dbReference>
<dbReference type="InParanoid" id="Q0P4A4"/>
<dbReference type="OrthoDB" id="41532at2759"/>
<dbReference type="PRO" id="PR:Q0P4A4"/>
<dbReference type="Proteomes" id="UP000000437">
    <property type="component" value="Chromosome 16"/>
</dbReference>
<dbReference type="GO" id="GO:0016020">
    <property type="term" value="C:membrane"/>
    <property type="evidence" value="ECO:0007669"/>
    <property type="project" value="UniProtKB-SubCell"/>
</dbReference>
<dbReference type="GO" id="GO:0008080">
    <property type="term" value="F:N-acetyltransferase activity"/>
    <property type="evidence" value="ECO:0000318"/>
    <property type="project" value="GO_Central"/>
</dbReference>
<dbReference type="CDD" id="cd04301">
    <property type="entry name" value="NAT_SF"/>
    <property type="match status" value="1"/>
</dbReference>
<dbReference type="Gene3D" id="3.40.630.30">
    <property type="match status" value="1"/>
</dbReference>
<dbReference type="InterPro" id="IPR016181">
    <property type="entry name" value="Acyl_CoA_acyltransferase"/>
</dbReference>
<dbReference type="InterPro" id="IPR000182">
    <property type="entry name" value="GNAT_dom"/>
</dbReference>
<dbReference type="InterPro" id="IPR050769">
    <property type="entry name" value="NAT_camello-type"/>
</dbReference>
<dbReference type="PANTHER" id="PTHR13947">
    <property type="entry name" value="GNAT FAMILY N-ACETYLTRANSFERASE"/>
    <property type="match status" value="1"/>
</dbReference>
<dbReference type="PANTHER" id="PTHR13947:SF51">
    <property type="entry name" value="N-ACETYLTRANSFERASE 14-RELATED"/>
    <property type="match status" value="1"/>
</dbReference>
<dbReference type="Pfam" id="PF00583">
    <property type="entry name" value="Acetyltransf_1"/>
    <property type="match status" value="1"/>
</dbReference>
<dbReference type="SUPFAM" id="SSF55729">
    <property type="entry name" value="Acyl-CoA N-acyltransferases (Nat)"/>
    <property type="match status" value="1"/>
</dbReference>
<dbReference type="PROSITE" id="PS51186">
    <property type="entry name" value="GNAT"/>
    <property type="match status" value="1"/>
</dbReference>
<organism>
    <name type="scientific">Danio rerio</name>
    <name type="common">Zebrafish</name>
    <name type="synonym">Brachydanio rerio</name>
    <dbReference type="NCBI Taxonomy" id="7955"/>
    <lineage>
        <taxon>Eukaryota</taxon>
        <taxon>Metazoa</taxon>
        <taxon>Chordata</taxon>
        <taxon>Craniata</taxon>
        <taxon>Vertebrata</taxon>
        <taxon>Euteleostomi</taxon>
        <taxon>Actinopterygii</taxon>
        <taxon>Neopterygii</taxon>
        <taxon>Teleostei</taxon>
        <taxon>Ostariophysi</taxon>
        <taxon>Cypriniformes</taxon>
        <taxon>Danionidae</taxon>
        <taxon>Danioninae</taxon>
        <taxon>Danio</taxon>
    </lineage>
</organism>
<protein>
    <recommendedName>
        <fullName>Probable N-acetyltransferase 14</fullName>
        <ecNumber evidence="4">2.3.1.-</ecNumber>
    </recommendedName>
</protein>
<reference key="1">
    <citation type="submission" date="2006-08" db="EMBL/GenBank/DDBJ databases">
        <authorList>
            <consortium name="NIH - Zebrafish Gene Collection (ZGC) project"/>
        </authorList>
    </citation>
    <scope>NUCLEOTIDE SEQUENCE [LARGE SCALE MRNA]</scope>
    <source>
        <tissue>Embryo</tissue>
    </source>
</reference>
<accession>Q0P4A4</accession>
<sequence>MVRLDLADVVLRRMQEKDIEAVKALIKEGCEGTENRLILHLLTRPLALLLLAILSSILRCVLHSFVLALVIPVFISVIYLKLTIPRSAGILGSCRPYWDYIGSSYHADTEPDLPNPHLGRAKLTTNQEKTRRRKKAKEKEKMNESEQVDEDELKQRAKVAGEVWVADSDGEIVGCVARDGWSRDGVCRVCRLVVQCWYRREGLGRLLVQGLESRTKQKGVCRVYAHVPIPSKVGEAFFRRLGYRLQGETAGIEEEEEDDYEDPEKGWLGYPLTKVFVKDL</sequence>
<comment type="function">
    <text evidence="4">Probable acetyltransferase.</text>
</comment>
<comment type="subcellular location">
    <subcellularLocation>
        <location evidence="4">Membrane</location>
        <topology evidence="4">Multi-pass membrane protein</topology>
    </subcellularLocation>
</comment>
<comment type="similarity">
    <text evidence="4">Belongs to the camello family.</text>
</comment>
<evidence type="ECO:0000255" key="1"/>
<evidence type="ECO:0000255" key="2">
    <source>
        <dbReference type="PROSITE-ProRule" id="PRU00532"/>
    </source>
</evidence>
<evidence type="ECO:0000256" key="3">
    <source>
        <dbReference type="SAM" id="MobiDB-lite"/>
    </source>
</evidence>
<evidence type="ECO:0000305" key="4"/>
<gene>
    <name type="primary">nat14</name>
    <name type="ORF">zgc:153234</name>
</gene>